<sequence length="398" mass="43101">MKQLTILGSTGSIGNSTLSVVRANPELFKVTALVAGRNVREMAQQCLEFSPRYAAMSDEHSAKSLRLLLAEQGSDTEVYSGETAACELAALDDVDQVMAAIVGIAGLPSTLAAIRAGKQVLLANKESLITCGKLFMDEVKRSRAQLLPIDSEHNAIFQSLPERIQRQLGYSSLNENGVSRIILTGSGGPFRETPLSQFSDVTPDQACAHPNWSMGRKISVDSATMMNKGLEYVEARWLFNASAEQIEVVLHPQSVIHSMVRYHDGSILAQMGTPDMRTPIAHAMAYPMRVSSGVAPLDFCKVGALTFTTPDYQRYPCLKLAIDACNAGQAATTALNAANEISVMAFLDSKIRFTDIEVINRTVVEGLLLSEPTSVEEVLVIDRKARDVAAQVIAKLNN</sequence>
<evidence type="ECO:0000255" key="1">
    <source>
        <dbReference type="HAMAP-Rule" id="MF_00183"/>
    </source>
</evidence>
<comment type="function">
    <text evidence="1">Catalyzes the NADPH-dependent rearrangement and reduction of 1-deoxy-D-xylulose-5-phosphate (DXP) to 2-C-methyl-D-erythritol 4-phosphate (MEP).</text>
</comment>
<comment type="catalytic activity">
    <reaction evidence="1">
        <text>2-C-methyl-D-erythritol 4-phosphate + NADP(+) = 1-deoxy-D-xylulose 5-phosphate + NADPH + H(+)</text>
        <dbReference type="Rhea" id="RHEA:13717"/>
        <dbReference type="ChEBI" id="CHEBI:15378"/>
        <dbReference type="ChEBI" id="CHEBI:57783"/>
        <dbReference type="ChEBI" id="CHEBI:57792"/>
        <dbReference type="ChEBI" id="CHEBI:58262"/>
        <dbReference type="ChEBI" id="CHEBI:58349"/>
        <dbReference type="EC" id="1.1.1.267"/>
    </reaction>
    <physiologicalReaction direction="right-to-left" evidence="1">
        <dbReference type="Rhea" id="RHEA:13719"/>
    </physiologicalReaction>
</comment>
<comment type="cofactor">
    <cofactor evidence="1">
        <name>Mg(2+)</name>
        <dbReference type="ChEBI" id="CHEBI:18420"/>
    </cofactor>
    <cofactor evidence="1">
        <name>Mn(2+)</name>
        <dbReference type="ChEBI" id="CHEBI:29035"/>
    </cofactor>
</comment>
<comment type="pathway">
    <text evidence="1">Isoprenoid biosynthesis; isopentenyl diphosphate biosynthesis via DXP pathway; isopentenyl diphosphate from 1-deoxy-D-xylulose 5-phosphate: step 1/6.</text>
</comment>
<comment type="subunit">
    <text evidence="1">Homodimer.</text>
</comment>
<comment type="similarity">
    <text evidence="1">Belongs to the DXR family.</text>
</comment>
<name>DXR_YERPB</name>
<keyword id="KW-0414">Isoprene biosynthesis</keyword>
<keyword id="KW-0464">Manganese</keyword>
<keyword id="KW-0479">Metal-binding</keyword>
<keyword id="KW-0521">NADP</keyword>
<keyword id="KW-0560">Oxidoreductase</keyword>
<gene>
    <name evidence="1" type="primary">dxr</name>
    <name type="ordered locus">YPTS_3119</name>
</gene>
<feature type="chain" id="PRO_1000098530" description="1-deoxy-D-xylulose 5-phosphate reductoisomerase">
    <location>
        <begin position="1"/>
        <end position="398"/>
    </location>
</feature>
<feature type="binding site" evidence="1">
    <location>
        <position position="10"/>
    </location>
    <ligand>
        <name>NADPH</name>
        <dbReference type="ChEBI" id="CHEBI:57783"/>
    </ligand>
</feature>
<feature type="binding site" evidence="1">
    <location>
        <position position="11"/>
    </location>
    <ligand>
        <name>NADPH</name>
        <dbReference type="ChEBI" id="CHEBI:57783"/>
    </ligand>
</feature>
<feature type="binding site" evidence="1">
    <location>
        <position position="12"/>
    </location>
    <ligand>
        <name>NADPH</name>
        <dbReference type="ChEBI" id="CHEBI:57783"/>
    </ligand>
</feature>
<feature type="binding site" evidence="1">
    <location>
        <position position="13"/>
    </location>
    <ligand>
        <name>NADPH</name>
        <dbReference type="ChEBI" id="CHEBI:57783"/>
    </ligand>
</feature>
<feature type="binding site" evidence="1">
    <location>
        <position position="36"/>
    </location>
    <ligand>
        <name>NADPH</name>
        <dbReference type="ChEBI" id="CHEBI:57783"/>
    </ligand>
</feature>
<feature type="binding site" evidence="1">
    <location>
        <position position="37"/>
    </location>
    <ligand>
        <name>NADPH</name>
        <dbReference type="ChEBI" id="CHEBI:57783"/>
    </ligand>
</feature>
<feature type="binding site" evidence="1">
    <location>
        <position position="38"/>
    </location>
    <ligand>
        <name>NADPH</name>
        <dbReference type="ChEBI" id="CHEBI:57783"/>
    </ligand>
</feature>
<feature type="binding site" evidence="1">
    <location>
        <position position="124"/>
    </location>
    <ligand>
        <name>NADPH</name>
        <dbReference type="ChEBI" id="CHEBI:57783"/>
    </ligand>
</feature>
<feature type="binding site" evidence="1">
    <location>
        <position position="125"/>
    </location>
    <ligand>
        <name>1-deoxy-D-xylulose 5-phosphate</name>
        <dbReference type="ChEBI" id="CHEBI:57792"/>
    </ligand>
</feature>
<feature type="binding site" evidence="1">
    <location>
        <position position="126"/>
    </location>
    <ligand>
        <name>NADPH</name>
        <dbReference type="ChEBI" id="CHEBI:57783"/>
    </ligand>
</feature>
<feature type="binding site" evidence="1">
    <location>
        <position position="150"/>
    </location>
    <ligand>
        <name>Mn(2+)</name>
        <dbReference type="ChEBI" id="CHEBI:29035"/>
    </ligand>
</feature>
<feature type="binding site" evidence="1">
    <location>
        <position position="151"/>
    </location>
    <ligand>
        <name>1-deoxy-D-xylulose 5-phosphate</name>
        <dbReference type="ChEBI" id="CHEBI:57792"/>
    </ligand>
</feature>
<feature type="binding site" evidence="1">
    <location>
        <position position="152"/>
    </location>
    <ligand>
        <name>1-deoxy-D-xylulose 5-phosphate</name>
        <dbReference type="ChEBI" id="CHEBI:57792"/>
    </ligand>
</feature>
<feature type="binding site" evidence="1">
    <location>
        <position position="152"/>
    </location>
    <ligand>
        <name>Mn(2+)</name>
        <dbReference type="ChEBI" id="CHEBI:29035"/>
    </ligand>
</feature>
<feature type="binding site" evidence="1">
    <location>
        <position position="186"/>
    </location>
    <ligand>
        <name>1-deoxy-D-xylulose 5-phosphate</name>
        <dbReference type="ChEBI" id="CHEBI:57792"/>
    </ligand>
</feature>
<feature type="binding site" evidence="1">
    <location>
        <position position="209"/>
    </location>
    <ligand>
        <name>1-deoxy-D-xylulose 5-phosphate</name>
        <dbReference type="ChEBI" id="CHEBI:57792"/>
    </ligand>
</feature>
<feature type="binding site" evidence="1">
    <location>
        <position position="215"/>
    </location>
    <ligand>
        <name>NADPH</name>
        <dbReference type="ChEBI" id="CHEBI:57783"/>
    </ligand>
</feature>
<feature type="binding site" evidence="1">
    <location>
        <position position="222"/>
    </location>
    <ligand>
        <name>1-deoxy-D-xylulose 5-phosphate</name>
        <dbReference type="ChEBI" id="CHEBI:57792"/>
    </ligand>
</feature>
<feature type="binding site" evidence="1">
    <location>
        <position position="227"/>
    </location>
    <ligand>
        <name>1-deoxy-D-xylulose 5-phosphate</name>
        <dbReference type="ChEBI" id="CHEBI:57792"/>
    </ligand>
</feature>
<feature type="binding site" evidence="1">
    <location>
        <position position="228"/>
    </location>
    <ligand>
        <name>1-deoxy-D-xylulose 5-phosphate</name>
        <dbReference type="ChEBI" id="CHEBI:57792"/>
    </ligand>
</feature>
<feature type="binding site" evidence="1">
    <location>
        <position position="231"/>
    </location>
    <ligand>
        <name>1-deoxy-D-xylulose 5-phosphate</name>
        <dbReference type="ChEBI" id="CHEBI:57792"/>
    </ligand>
</feature>
<feature type="binding site" evidence="1">
    <location>
        <position position="231"/>
    </location>
    <ligand>
        <name>Mn(2+)</name>
        <dbReference type="ChEBI" id="CHEBI:29035"/>
    </ligand>
</feature>
<reference key="1">
    <citation type="submission" date="2008-04" db="EMBL/GenBank/DDBJ databases">
        <title>Complete sequence of Yersinia pseudotuberculosis PB1/+.</title>
        <authorList>
            <person name="Copeland A."/>
            <person name="Lucas S."/>
            <person name="Lapidus A."/>
            <person name="Glavina del Rio T."/>
            <person name="Dalin E."/>
            <person name="Tice H."/>
            <person name="Bruce D."/>
            <person name="Goodwin L."/>
            <person name="Pitluck S."/>
            <person name="Munk A.C."/>
            <person name="Brettin T."/>
            <person name="Detter J.C."/>
            <person name="Han C."/>
            <person name="Tapia R."/>
            <person name="Schmutz J."/>
            <person name="Larimer F."/>
            <person name="Land M."/>
            <person name="Hauser L."/>
            <person name="Challacombe J.F."/>
            <person name="Green L."/>
            <person name="Lindler L.E."/>
            <person name="Nikolich M.P."/>
            <person name="Richardson P."/>
        </authorList>
    </citation>
    <scope>NUCLEOTIDE SEQUENCE [LARGE SCALE GENOMIC DNA]</scope>
    <source>
        <strain>PB1/+</strain>
    </source>
</reference>
<proteinExistence type="inferred from homology"/>
<dbReference type="EC" id="1.1.1.267" evidence="1"/>
<dbReference type="EMBL" id="CP001048">
    <property type="protein sequence ID" value="ACC90074.1"/>
    <property type="molecule type" value="Genomic_DNA"/>
</dbReference>
<dbReference type="SMR" id="B2JZ30"/>
<dbReference type="KEGG" id="ypb:YPTS_3119"/>
<dbReference type="PATRIC" id="fig|502801.10.peg.2551"/>
<dbReference type="UniPathway" id="UPA00056">
    <property type="reaction ID" value="UER00092"/>
</dbReference>
<dbReference type="GO" id="GO:0030604">
    <property type="term" value="F:1-deoxy-D-xylulose-5-phosphate reductoisomerase activity"/>
    <property type="evidence" value="ECO:0007669"/>
    <property type="project" value="UniProtKB-UniRule"/>
</dbReference>
<dbReference type="GO" id="GO:0030145">
    <property type="term" value="F:manganese ion binding"/>
    <property type="evidence" value="ECO:0007669"/>
    <property type="project" value="TreeGrafter"/>
</dbReference>
<dbReference type="GO" id="GO:0070402">
    <property type="term" value="F:NADPH binding"/>
    <property type="evidence" value="ECO:0007669"/>
    <property type="project" value="InterPro"/>
</dbReference>
<dbReference type="GO" id="GO:0051484">
    <property type="term" value="P:isopentenyl diphosphate biosynthetic process, methylerythritol 4-phosphate pathway involved in terpenoid biosynthetic process"/>
    <property type="evidence" value="ECO:0007669"/>
    <property type="project" value="TreeGrafter"/>
</dbReference>
<dbReference type="FunFam" id="1.10.1740.10:FF:000004">
    <property type="entry name" value="1-deoxy-D-xylulose 5-phosphate reductoisomerase"/>
    <property type="match status" value="1"/>
</dbReference>
<dbReference type="FunFam" id="3.40.50.720:FF:000045">
    <property type="entry name" value="1-deoxy-D-xylulose 5-phosphate reductoisomerase"/>
    <property type="match status" value="1"/>
</dbReference>
<dbReference type="Gene3D" id="1.10.1740.10">
    <property type="match status" value="1"/>
</dbReference>
<dbReference type="Gene3D" id="3.40.50.720">
    <property type="entry name" value="NAD(P)-binding Rossmann-like Domain"/>
    <property type="match status" value="1"/>
</dbReference>
<dbReference type="HAMAP" id="MF_00183">
    <property type="entry name" value="DXP_reductoisom"/>
    <property type="match status" value="1"/>
</dbReference>
<dbReference type="InterPro" id="IPR003821">
    <property type="entry name" value="DXP_reductoisomerase"/>
</dbReference>
<dbReference type="InterPro" id="IPR013644">
    <property type="entry name" value="DXP_reductoisomerase_C"/>
</dbReference>
<dbReference type="InterPro" id="IPR013512">
    <property type="entry name" value="DXP_reductoisomerase_N"/>
</dbReference>
<dbReference type="InterPro" id="IPR026877">
    <property type="entry name" value="DXPR_C"/>
</dbReference>
<dbReference type="InterPro" id="IPR036169">
    <property type="entry name" value="DXPR_C_sf"/>
</dbReference>
<dbReference type="InterPro" id="IPR036291">
    <property type="entry name" value="NAD(P)-bd_dom_sf"/>
</dbReference>
<dbReference type="NCBIfam" id="TIGR00243">
    <property type="entry name" value="Dxr"/>
    <property type="match status" value="1"/>
</dbReference>
<dbReference type="NCBIfam" id="NF003938">
    <property type="entry name" value="PRK05447.1-1"/>
    <property type="match status" value="1"/>
</dbReference>
<dbReference type="NCBIfam" id="NF009114">
    <property type="entry name" value="PRK12464.1"/>
    <property type="match status" value="1"/>
</dbReference>
<dbReference type="PANTHER" id="PTHR30525">
    <property type="entry name" value="1-DEOXY-D-XYLULOSE 5-PHOSPHATE REDUCTOISOMERASE"/>
    <property type="match status" value="1"/>
</dbReference>
<dbReference type="PANTHER" id="PTHR30525:SF0">
    <property type="entry name" value="1-DEOXY-D-XYLULOSE 5-PHOSPHATE REDUCTOISOMERASE, CHLOROPLASTIC"/>
    <property type="match status" value="1"/>
</dbReference>
<dbReference type="Pfam" id="PF08436">
    <property type="entry name" value="DXP_redisom_C"/>
    <property type="match status" value="1"/>
</dbReference>
<dbReference type="Pfam" id="PF02670">
    <property type="entry name" value="DXP_reductoisom"/>
    <property type="match status" value="1"/>
</dbReference>
<dbReference type="Pfam" id="PF13288">
    <property type="entry name" value="DXPR_C"/>
    <property type="match status" value="1"/>
</dbReference>
<dbReference type="PIRSF" id="PIRSF006205">
    <property type="entry name" value="Dxp_reductismrs"/>
    <property type="match status" value="1"/>
</dbReference>
<dbReference type="SUPFAM" id="SSF69055">
    <property type="entry name" value="1-deoxy-D-xylulose-5-phosphate reductoisomerase, C-terminal domain"/>
    <property type="match status" value="1"/>
</dbReference>
<dbReference type="SUPFAM" id="SSF55347">
    <property type="entry name" value="Glyceraldehyde-3-phosphate dehydrogenase-like, C-terminal domain"/>
    <property type="match status" value="1"/>
</dbReference>
<dbReference type="SUPFAM" id="SSF51735">
    <property type="entry name" value="NAD(P)-binding Rossmann-fold domains"/>
    <property type="match status" value="1"/>
</dbReference>
<organism>
    <name type="scientific">Yersinia pseudotuberculosis serotype IB (strain PB1/+)</name>
    <dbReference type="NCBI Taxonomy" id="502801"/>
    <lineage>
        <taxon>Bacteria</taxon>
        <taxon>Pseudomonadati</taxon>
        <taxon>Pseudomonadota</taxon>
        <taxon>Gammaproteobacteria</taxon>
        <taxon>Enterobacterales</taxon>
        <taxon>Yersiniaceae</taxon>
        <taxon>Yersinia</taxon>
    </lineage>
</organism>
<accession>B2JZ30</accession>
<protein>
    <recommendedName>
        <fullName evidence="1">1-deoxy-D-xylulose 5-phosphate reductoisomerase</fullName>
        <shortName evidence="1">DXP reductoisomerase</shortName>
        <ecNumber evidence="1">1.1.1.267</ecNumber>
    </recommendedName>
    <alternativeName>
        <fullName evidence="1">1-deoxyxylulose-5-phosphate reductoisomerase</fullName>
    </alternativeName>
    <alternativeName>
        <fullName evidence="1">2-C-methyl-D-erythritol 4-phosphate synthase</fullName>
    </alternativeName>
</protein>